<evidence type="ECO:0000250" key="1"/>
<evidence type="ECO:0000255" key="2">
    <source>
        <dbReference type="PROSITE-ProRule" id="PRU00349"/>
    </source>
</evidence>
<keyword id="KW-0010">Activator</keyword>
<keyword id="KW-0119">Carbohydrate metabolism</keyword>
<keyword id="KW-0238">DNA-binding</keyword>
<keyword id="KW-0294">Fucose metabolism</keyword>
<keyword id="KW-1185">Reference proteome</keyword>
<keyword id="KW-0804">Transcription</keyword>
<keyword id="KW-0805">Transcription regulation</keyword>
<protein>
    <recommendedName>
        <fullName>L-fucose operon activator</fullName>
    </recommendedName>
</protein>
<dbReference type="EMBL" id="L42023">
    <property type="protein sequence ID" value="AAC22274.1"/>
    <property type="molecule type" value="Genomic_DNA"/>
</dbReference>
<dbReference type="PIR" id="G64081">
    <property type="entry name" value="G64081"/>
</dbReference>
<dbReference type="RefSeq" id="NP_438773.1">
    <property type="nucleotide sequence ID" value="NC_000907.1"/>
</dbReference>
<dbReference type="SMR" id="P44780"/>
<dbReference type="STRING" id="71421.HI_0615"/>
<dbReference type="DNASU" id="949664"/>
<dbReference type="EnsemblBacteria" id="AAC22274">
    <property type="protein sequence ID" value="AAC22274"/>
    <property type="gene ID" value="HI_0615"/>
</dbReference>
<dbReference type="KEGG" id="hin:HI_0615"/>
<dbReference type="PATRIC" id="fig|71421.8.peg.639"/>
<dbReference type="eggNOG" id="COG1349">
    <property type="taxonomic scope" value="Bacteria"/>
</dbReference>
<dbReference type="HOGENOM" id="CLU_060699_1_2_6"/>
<dbReference type="OrthoDB" id="6846621at2"/>
<dbReference type="PhylomeDB" id="P44780"/>
<dbReference type="BioCyc" id="HINF71421:G1GJ1-636-MONOMER"/>
<dbReference type="Proteomes" id="UP000000579">
    <property type="component" value="Chromosome"/>
</dbReference>
<dbReference type="GO" id="GO:0000987">
    <property type="term" value="F:cis-regulatory region sequence-specific DNA binding"/>
    <property type="evidence" value="ECO:0000318"/>
    <property type="project" value="GO_Central"/>
</dbReference>
<dbReference type="GO" id="GO:0098531">
    <property type="term" value="F:ligand-modulated transcription factor activity"/>
    <property type="evidence" value="ECO:0000318"/>
    <property type="project" value="GO_Central"/>
</dbReference>
<dbReference type="GO" id="GO:0006004">
    <property type="term" value="P:fucose metabolic process"/>
    <property type="evidence" value="ECO:0007669"/>
    <property type="project" value="UniProtKB-KW"/>
</dbReference>
<dbReference type="GO" id="GO:0006355">
    <property type="term" value="P:regulation of DNA-templated transcription"/>
    <property type="evidence" value="ECO:0000318"/>
    <property type="project" value="GO_Central"/>
</dbReference>
<dbReference type="Gene3D" id="3.40.50.1360">
    <property type="match status" value="1"/>
</dbReference>
<dbReference type="Gene3D" id="1.10.10.10">
    <property type="entry name" value="Winged helix-like DNA-binding domain superfamily/Winged helix DNA-binding domain"/>
    <property type="match status" value="1"/>
</dbReference>
<dbReference type="InterPro" id="IPR050313">
    <property type="entry name" value="Carb_Metab_HTH_regulators"/>
</dbReference>
<dbReference type="InterPro" id="IPR014036">
    <property type="entry name" value="DeoR-like_C"/>
</dbReference>
<dbReference type="InterPro" id="IPR001034">
    <property type="entry name" value="DeoR_HTH"/>
</dbReference>
<dbReference type="InterPro" id="IPR037171">
    <property type="entry name" value="NagB/RpiA_transferase-like"/>
</dbReference>
<dbReference type="InterPro" id="IPR018356">
    <property type="entry name" value="Tscrpt_reg_HTH_DeoR_CS"/>
</dbReference>
<dbReference type="InterPro" id="IPR036388">
    <property type="entry name" value="WH-like_DNA-bd_sf"/>
</dbReference>
<dbReference type="InterPro" id="IPR036390">
    <property type="entry name" value="WH_DNA-bd_sf"/>
</dbReference>
<dbReference type="PANTHER" id="PTHR30363:SF44">
    <property type="entry name" value="AGA OPERON TRANSCRIPTIONAL REPRESSOR-RELATED"/>
    <property type="match status" value="1"/>
</dbReference>
<dbReference type="PANTHER" id="PTHR30363">
    <property type="entry name" value="HTH-TYPE TRANSCRIPTIONAL REGULATOR SRLR-RELATED"/>
    <property type="match status" value="1"/>
</dbReference>
<dbReference type="Pfam" id="PF00455">
    <property type="entry name" value="DeoRC"/>
    <property type="match status" value="1"/>
</dbReference>
<dbReference type="Pfam" id="PF08220">
    <property type="entry name" value="HTH_DeoR"/>
    <property type="match status" value="1"/>
</dbReference>
<dbReference type="PRINTS" id="PR00037">
    <property type="entry name" value="HTHLACR"/>
</dbReference>
<dbReference type="SMART" id="SM01134">
    <property type="entry name" value="DeoRC"/>
    <property type="match status" value="1"/>
</dbReference>
<dbReference type="SMART" id="SM00420">
    <property type="entry name" value="HTH_DEOR"/>
    <property type="match status" value="1"/>
</dbReference>
<dbReference type="SUPFAM" id="SSF100950">
    <property type="entry name" value="NagB/RpiA/CoA transferase-like"/>
    <property type="match status" value="1"/>
</dbReference>
<dbReference type="SUPFAM" id="SSF46785">
    <property type="entry name" value="Winged helix' DNA-binding domain"/>
    <property type="match status" value="1"/>
</dbReference>
<dbReference type="PROSITE" id="PS00894">
    <property type="entry name" value="HTH_DEOR_1"/>
    <property type="match status" value="1"/>
</dbReference>
<dbReference type="PROSITE" id="PS51000">
    <property type="entry name" value="HTH_DEOR_2"/>
    <property type="match status" value="1"/>
</dbReference>
<name>FUCR_HAEIN</name>
<sequence length="249" mass="28163">MNYRDELILQWVNQQGKASVIELAQHCDISVETIRRDLNKLANKGLLHRTHGGAVSNKTKDLGSFFQTRKHINATAKRHIAQKALDLLYENAVIGLDASSTSWYFAYLMPDIPCTVVTNSMFNINALVNKSNVKTIVTGGVYSAKYEAFYGPLSEYLLQRLHINFSVFSCSGIDKNGNIWESNELNASLKRKMMEASERAYLLIDSSKFEKTSLIQLADLSKINTIFSDRSLPDNLQKYCEQHDIMTVL</sequence>
<accession>P44780</accession>
<comment type="function">
    <text evidence="1">Transcriptional activator of the fuc operon.</text>
</comment>
<proteinExistence type="inferred from homology"/>
<reference key="1">
    <citation type="journal article" date="1995" name="Science">
        <title>Whole-genome random sequencing and assembly of Haemophilus influenzae Rd.</title>
        <authorList>
            <person name="Fleischmann R.D."/>
            <person name="Adams M.D."/>
            <person name="White O."/>
            <person name="Clayton R.A."/>
            <person name="Kirkness E.F."/>
            <person name="Kerlavage A.R."/>
            <person name="Bult C.J."/>
            <person name="Tomb J.-F."/>
            <person name="Dougherty B.A."/>
            <person name="Merrick J.M."/>
            <person name="McKenney K."/>
            <person name="Sutton G.G."/>
            <person name="FitzHugh W."/>
            <person name="Fields C.A."/>
            <person name="Gocayne J.D."/>
            <person name="Scott J.D."/>
            <person name="Shirley R."/>
            <person name="Liu L.-I."/>
            <person name="Glodek A."/>
            <person name="Kelley J.M."/>
            <person name="Weidman J.F."/>
            <person name="Phillips C.A."/>
            <person name="Spriggs T."/>
            <person name="Hedblom E."/>
            <person name="Cotton M.D."/>
            <person name="Utterback T.R."/>
            <person name="Hanna M.C."/>
            <person name="Nguyen D.T."/>
            <person name="Saudek D.M."/>
            <person name="Brandon R.C."/>
            <person name="Fine L.D."/>
            <person name="Fritchman J.L."/>
            <person name="Fuhrmann J.L."/>
            <person name="Geoghagen N.S.M."/>
            <person name="Gnehm C.L."/>
            <person name="McDonald L.A."/>
            <person name="Small K.V."/>
            <person name="Fraser C.M."/>
            <person name="Smith H.O."/>
            <person name="Venter J.C."/>
        </authorList>
    </citation>
    <scope>NUCLEOTIDE SEQUENCE [LARGE SCALE GENOMIC DNA]</scope>
    <source>
        <strain>ATCC 51907 / DSM 11121 / KW20 / Rd</strain>
    </source>
</reference>
<gene>
    <name type="primary">fucR</name>
    <name type="ordered locus">HI_0615</name>
</gene>
<organism>
    <name type="scientific">Haemophilus influenzae (strain ATCC 51907 / DSM 11121 / KW20 / Rd)</name>
    <dbReference type="NCBI Taxonomy" id="71421"/>
    <lineage>
        <taxon>Bacteria</taxon>
        <taxon>Pseudomonadati</taxon>
        <taxon>Pseudomonadota</taxon>
        <taxon>Gammaproteobacteria</taxon>
        <taxon>Pasteurellales</taxon>
        <taxon>Pasteurellaceae</taxon>
        <taxon>Haemophilus</taxon>
    </lineage>
</organism>
<feature type="chain" id="PRO_0000050249" description="L-fucose operon activator">
    <location>
        <begin position="1"/>
        <end position="249"/>
    </location>
</feature>
<feature type="domain" description="HTH deoR-type" evidence="2">
    <location>
        <begin position="1"/>
        <end position="56"/>
    </location>
</feature>
<feature type="DNA-binding region" description="H-T-H motif" evidence="2">
    <location>
        <begin position="18"/>
        <end position="37"/>
    </location>
</feature>